<evidence type="ECO:0000305" key="1"/>
<dbReference type="EMBL" id="AC025808">
    <property type="protein sequence ID" value="AAF79419.1"/>
    <property type="status" value="ALT_INIT"/>
    <property type="molecule type" value="Genomic_DNA"/>
</dbReference>
<dbReference type="EMBL" id="AC069143">
    <property type="protein sequence ID" value="AAF82237.1"/>
    <property type="status" value="ALT_SEQ"/>
    <property type="molecule type" value="Genomic_DNA"/>
</dbReference>
<dbReference type="EMBL" id="CP002684">
    <property type="protein sequence ID" value="AEE29826.1"/>
    <property type="molecule type" value="Genomic_DNA"/>
</dbReference>
<dbReference type="EMBL" id="CP002684">
    <property type="protein sequence ID" value="ANM60995.1"/>
    <property type="molecule type" value="Genomic_DNA"/>
</dbReference>
<dbReference type="PIR" id="D86326">
    <property type="entry name" value="D86326"/>
</dbReference>
<dbReference type="RefSeq" id="NP_001319043.1">
    <property type="nucleotide sequence ID" value="NM_001332390.1"/>
</dbReference>
<dbReference type="RefSeq" id="NP_173362.2">
    <property type="nucleotide sequence ID" value="NM_101786.3"/>
</dbReference>
<dbReference type="SMR" id="Q9LN69"/>
<dbReference type="FunCoup" id="Q9LN69">
    <property type="interactions" value="1415"/>
</dbReference>
<dbReference type="STRING" id="3702.Q9LN69"/>
<dbReference type="iPTMnet" id="Q9LN69"/>
<dbReference type="PaxDb" id="3702-AT1G19290.1"/>
<dbReference type="ProteomicsDB" id="234795"/>
<dbReference type="EnsemblPlants" id="AT1G19290.1">
    <property type="protein sequence ID" value="AT1G19290.1"/>
    <property type="gene ID" value="AT1G19290"/>
</dbReference>
<dbReference type="EnsemblPlants" id="AT1G19290.2">
    <property type="protein sequence ID" value="AT1G19290.2"/>
    <property type="gene ID" value="AT1G19290"/>
</dbReference>
<dbReference type="GeneID" id="838511"/>
<dbReference type="Gramene" id="AT1G19290.1">
    <property type="protein sequence ID" value="AT1G19290.1"/>
    <property type="gene ID" value="AT1G19290"/>
</dbReference>
<dbReference type="Gramene" id="AT1G19290.2">
    <property type="protein sequence ID" value="AT1G19290.2"/>
    <property type="gene ID" value="AT1G19290"/>
</dbReference>
<dbReference type="KEGG" id="ath:AT1G19290"/>
<dbReference type="Araport" id="AT1G19290"/>
<dbReference type="TAIR" id="AT1G19290">
    <property type="gene designation" value="TANG2"/>
</dbReference>
<dbReference type="eggNOG" id="KOG4197">
    <property type="taxonomic scope" value="Eukaryota"/>
</dbReference>
<dbReference type="HOGENOM" id="CLU_002706_49_10_1"/>
<dbReference type="InParanoid" id="Q9LN69"/>
<dbReference type="OMA" id="TEVYNQF"/>
<dbReference type="PhylomeDB" id="Q9LN69"/>
<dbReference type="PRO" id="PR:Q9LN69"/>
<dbReference type="Proteomes" id="UP000006548">
    <property type="component" value="Chromosome 1"/>
</dbReference>
<dbReference type="ExpressionAtlas" id="Q9LN69">
    <property type="expression patterns" value="baseline and differential"/>
</dbReference>
<dbReference type="GO" id="GO:0005739">
    <property type="term" value="C:mitochondrion"/>
    <property type="evidence" value="ECO:0000314"/>
    <property type="project" value="TAIR"/>
</dbReference>
<dbReference type="GO" id="GO:0000963">
    <property type="term" value="P:mitochondrial RNA processing"/>
    <property type="evidence" value="ECO:0000315"/>
    <property type="project" value="TAIR"/>
</dbReference>
<dbReference type="GO" id="GO:0008380">
    <property type="term" value="P:RNA splicing"/>
    <property type="evidence" value="ECO:0000315"/>
    <property type="project" value="TAIR"/>
</dbReference>
<dbReference type="Gene3D" id="1.25.40.10">
    <property type="entry name" value="Tetratricopeptide repeat domain"/>
    <property type="match status" value="9"/>
</dbReference>
<dbReference type="InterPro" id="IPR051114">
    <property type="entry name" value="Mito_RNA_Proc_CCM1"/>
</dbReference>
<dbReference type="InterPro" id="IPR002885">
    <property type="entry name" value="Pentatricopeptide_rpt"/>
</dbReference>
<dbReference type="InterPro" id="IPR011990">
    <property type="entry name" value="TPR-like_helical_dom_sf"/>
</dbReference>
<dbReference type="NCBIfam" id="TIGR00756">
    <property type="entry name" value="PPR"/>
    <property type="match status" value="14"/>
</dbReference>
<dbReference type="PANTHER" id="PTHR47934:SF2">
    <property type="entry name" value="OS07G0671200 PROTEIN"/>
    <property type="match status" value="1"/>
</dbReference>
<dbReference type="PANTHER" id="PTHR47934">
    <property type="entry name" value="PENTATRICOPEPTIDE REPEAT-CONTAINING PROTEIN PET309, MITOCHONDRIAL"/>
    <property type="match status" value="1"/>
</dbReference>
<dbReference type="Pfam" id="PF01535">
    <property type="entry name" value="PPR"/>
    <property type="match status" value="1"/>
</dbReference>
<dbReference type="Pfam" id="PF12854">
    <property type="entry name" value="PPR_1"/>
    <property type="match status" value="1"/>
</dbReference>
<dbReference type="Pfam" id="PF13041">
    <property type="entry name" value="PPR_2"/>
    <property type="match status" value="6"/>
</dbReference>
<dbReference type="Pfam" id="PF13812">
    <property type="entry name" value="PPR_3"/>
    <property type="match status" value="1"/>
</dbReference>
<dbReference type="SUPFAM" id="SSF81901">
    <property type="entry name" value="HCP-like"/>
    <property type="match status" value="2"/>
</dbReference>
<dbReference type="PROSITE" id="PS51375">
    <property type="entry name" value="PPR"/>
    <property type="match status" value="20"/>
</dbReference>
<keyword id="KW-1185">Reference proteome</keyword>
<keyword id="KW-0677">Repeat</keyword>
<feature type="chain" id="PRO_0000342791" description="Putative pentatricopeptide repeat-containing protein At1g19290">
    <location>
        <begin position="1"/>
        <end position="904"/>
    </location>
</feature>
<feature type="repeat" description="PPR 1">
    <location>
        <begin position="154"/>
        <end position="188"/>
    </location>
</feature>
<feature type="repeat" description="PPR 2">
    <location>
        <begin position="189"/>
        <end position="223"/>
    </location>
</feature>
<feature type="repeat" description="PPR 3">
    <location>
        <begin position="224"/>
        <end position="254"/>
    </location>
</feature>
<feature type="repeat" description="PPR 4">
    <location>
        <begin position="260"/>
        <end position="294"/>
    </location>
</feature>
<feature type="repeat" description="PPR 5">
    <location>
        <begin position="295"/>
        <end position="329"/>
    </location>
</feature>
<feature type="repeat" description="PPR 6">
    <location>
        <begin position="330"/>
        <end position="364"/>
    </location>
</feature>
<feature type="repeat" description="PPR 7">
    <location>
        <begin position="365"/>
        <end position="399"/>
    </location>
</feature>
<feature type="repeat" description="PPR 8">
    <location>
        <begin position="400"/>
        <end position="434"/>
    </location>
</feature>
<feature type="repeat" description="PPR 9">
    <location>
        <begin position="435"/>
        <end position="469"/>
    </location>
</feature>
<feature type="repeat" description="PPR 10">
    <location>
        <begin position="470"/>
        <end position="504"/>
    </location>
</feature>
<feature type="repeat" description="PPR 11">
    <location>
        <begin position="505"/>
        <end position="539"/>
    </location>
</feature>
<feature type="repeat" description="PPR 12">
    <location>
        <begin position="540"/>
        <end position="574"/>
    </location>
</feature>
<feature type="repeat" description="PPR 13">
    <location>
        <begin position="575"/>
        <end position="609"/>
    </location>
</feature>
<feature type="repeat" description="PPR 14">
    <location>
        <begin position="610"/>
        <end position="644"/>
    </location>
</feature>
<feature type="repeat" description="PPR 15">
    <location>
        <begin position="645"/>
        <end position="679"/>
    </location>
</feature>
<feature type="repeat" description="PPR 16">
    <location>
        <begin position="718"/>
        <end position="753"/>
    </location>
</feature>
<feature type="repeat" description="PPR 17">
    <location>
        <begin position="754"/>
        <end position="788"/>
    </location>
</feature>
<feature type="repeat" description="PPR 18">
    <location>
        <begin position="789"/>
        <end position="823"/>
    </location>
</feature>
<feature type="repeat" description="PPR 19">
    <location>
        <begin position="824"/>
        <end position="858"/>
    </location>
</feature>
<sequence length="904" mass="101860">MLRRSPARVVAYQLLPFLYTRSFSEASRTLRRELRGGNGRIRPELLERVSRLLVLGRYEALHDLSLDFSDELLNSILRRLRLNPEACLEIFNLASKQQKFRPDYKAYCKMVHILSRARNYQQTKSYLCELVALNHSGFVVWGELVRVFKEFSFSPTVFDMILKVYAEKGLVKNALHVFDNMGNYGRIPSLLSCNSLLSNLVRKGENFVALHVYDQMISFEVSPDVFTCSIVVNAYCRSGNVDKAMVFAKETESSLGLELNVVTYNSLINGYAMIGDVEGMTRVLRLMSERGVSRNVVTYTSLIKGYCKKGLMEEAEHVFELLKEKKLVADQHMYGVLMDGYCRTGQIRDAVRVHDNMIEIGVRTNTTICNSLINGYCKSGQLVEAEQIFSRMNDWSLKPDHHTYNTLVDGYCRAGYVDEALKLCDQMCQKEVVPTVMTYNILLKGYSRIGAFHDVLSLWKMMLKRGVNADEISCSTLLEALFKLGDFNEAMKLWENVLARGLLTDTITLNVMISGLCKMEKVNEAKEILDNVNIFRCKPAVQTYQALSHGYYKVGNLKEAFAVKEYMERKGIFPTIEMYNTLISGAFKYRHLNKVADLVIELRARGLTPTVATYGALITGWCNIGMIDKAYATCFEMIEKGITLNVNICSKIANSLFRLDKIDEACLLLQKIVDFDLLLPGYQSLKEFLEASATTCLKTQKIAESVENSTPKKLLVPNNIVYNVAIAGLCKAGKLEDARKLFSDLLSSDRFIPDEYTYTILIHGCAIAGDINKAFTLRDEMALKGIIPNIVTYNALIKGLCKLGNVDRAQRLLHKLPQKGITPNAITYNTLIDGLVKSGNVAEAMRLKEKMIEKGLVRGSDKQGDVDIPKEVVLDPEVKLGSTGVIEMNSNELYDVRRVSEAVV</sequence>
<name>PPR50_ARATH</name>
<protein>
    <recommendedName>
        <fullName>Putative pentatricopeptide repeat-containing protein At1g19290</fullName>
    </recommendedName>
</protein>
<proteinExistence type="inferred from homology"/>
<accession>Q9LN69</accession>
<accession>Q9LM99</accession>
<gene>
    <name type="ordered locus">At1g19290</name>
    <name type="ORF">F18O14.1</name>
    <name type="ORF">T29M8.14</name>
</gene>
<reference key="1">
    <citation type="journal article" date="2000" name="Nature">
        <title>Sequence and analysis of chromosome 1 of the plant Arabidopsis thaliana.</title>
        <authorList>
            <person name="Theologis A."/>
            <person name="Ecker J.R."/>
            <person name="Palm C.J."/>
            <person name="Federspiel N.A."/>
            <person name="Kaul S."/>
            <person name="White O."/>
            <person name="Alonso J."/>
            <person name="Altafi H."/>
            <person name="Araujo R."/>
            <person name="Bowman C.L."/>
            <person name="Brooks S.Y."/>
            <person name="Buehler E."/>
            <person name="Chan A."/>
            <person name="Chao Q."/>
            <person name="Chen H."/>
            <person name="Cheuk R.F."/>
            <person name="Chin C.W."/>
            <person name="Chung M.K."/>
            <person name="Conn L."/>
            <person name="Conway A.B."/>
            <person name="Conway A.R."/>
            <person name="Creasy T.H."/>
            <person name="Dewar K."/>
            <person name="Dunn P."/>
            <person name="Etgu P."/>
            <person name="Feldblyum T.V."/>
            <person name="Feng J.-D."/>
            <person name="Fong B."/>
            <person name="Fujii C.Y."/>
            <person name="Gill J.E."/>
            <person name="Goldsmith A.D."/>
            <person name="Haas B."/>
            <person name="Hansen N.F."/>
            <person name="Hughes B."/>
            <person name="Huizar L."/>
            <person name="Hunter J.L."/>
            <person name="Jenkins J."/>
            <person name="Johnson-Hopson C."/>
            <person name="Khan S."/>
            <person name="Khaykin E."/>
            <person name="Kim C.J."/>
            <person name="Koo H.L."/>
            <person name="Kremenetskaia I."/>
            <person name="Kurtz D.B."/>
            <person name="Kwan A."/>
            <person name="Lam B."/>
            <person name="Langin-Hooper S."/>
            <person name="Lee A."/>
            <person name="Lee J.M."/>
            <person name="Lenz C.A."/>
            <person name="Li J.H."/>
            <person name="Li Y.-P."/>
            <person name="Lin X."/>
            <person name="Liu S.X."/>
            <person name="Liu Z.A."/>
            <person name="Luros J.S."/>
            <person name="Maiti R."/>
            <person name="Marziali A."/>
            <person name="Militscher J."/>
            <person name="Miranda M."/>
            <person name="Nguyen M."/>
            <person name="Nierman W.C."/>
            <person name="Osborne B.I."/>
            <person name="Pai G."/>
            <person name="Peterson J."/>
            <person name="Pham P.K."/>
            <person name="Rizzo M."/>
            <person name="Rooney T."/>
            <person name="Rowley D."/>
            <person name="Sakano H."/>
            <person name="Salzberg S.L."/>
            <person name="Schwartz J.R."/>
            <person name="Shinn P."/>
            <person name="Southwick A.M."/>
            <person name="Sun H."/>
            <person name="Tallon L.J."/>
            <person name="Tambunga G."/>
            <person name="Toriumi M.J."/>
            <person name="Town C.D."/>
            <person name="Utterback T."/>
            <person name="Van Aken S."/>
            <person name="Vaysberg M."/>
            <person name="Vysotskaia V.S."/>
            <person name="Walker M."/>
            <person name="Wu D."/>
            <person name="Yu G."/>
            <person name="Fraser C.M."/>
            <person name="Venter J.C."/>
            <person name="Davis R.W."/>
        </authorList>
    </citation>
    <scope>NUCLEOTIDE SEQUENCE [LARGE SCALE GENOMIC DNA]</scope>
    <source>
        <strain>cv. Columbia</strain>
    </source>
</reference>
<reference key="2">
    <citation type="journal article" date="2017" name="Plant J.">
        <title>Araport11: a complete reannotation of the Arabidopsis thaliana reference genome.</title>
        <authorList>
            <person name="Cheng C.Y."/>
            <person name="Krishnakumar V."/>
            <person name="Chan A.P."/>
            <person name="Thibaud-Nissen F."/>
            <person name="Schobel S."/>
            <person name="Town C.D."/>
        </authorList>
    </citation>
    <scope>GENOME REANNOTATION</scope>
    <source>
        <strain>cv. Columbia</strain>
    </source>
</reference>
<reference key="3">
    <citation type="journal article" date="2004" name="Plant Cell">
        <title>Genome-wide analysis of Arabidopsis pentatricopeptide repeat proteins reveals their essential role in organelle biogenesis.</title>
        <authorList>
            <person name="Lurin C."/>
            <person name="Andres C."/>
            <person name="Aubourg S."/>
            <person name="Bellaoui M."/>
            <person name="Bitton F."/>
            <person name="Bruyere C."/>
            <person name="Caboche M."/>
            <person name="Debast C."/>
            <person name="Gualberto J."/>
            <person name="Hoffmann B."/>
            <person name="Lecharny A."/>
            <person name="Le Ret M."/>
            <person name="Martin-Magniette M.-L."/>
            <person name="Mireau H."/>
            <person name="Peeters N."/>
            <person name="Renou J.-P."/>
            <person name="Szurek B."/>
            <person name="Taconnat L."/>
            <person name="Small I."/>
        </authorList>
    </citation>
    <scope>GENE FAMILY</scope>
</reference>
<organism>
    <name type="scientific">Arabidopsis thaliana</name>
    <name type="common">Mouse-ear cress</name>
    <dbReference type="NCBI Taxonomy" id="3702"/>
    <lineage>
        <taxon>Eukaryota</taxon>
        <taxon>Viridiplantae</taxon>
        <taxon>Streptophyta</taxon>
        <taxon>Embryophyta</taxon>
        <taxon>Tracheophyta</taxon>
        <taxon>Spermatophyta</taxon>
        <taxon>Magnoliopsida</taxon>
        <taxon>eudicotyledons</taxon>
        <taxon>Gunneridae</taxon>
        <taxon>Pentapetalae</taxon>
        <taxon>rosids</taxon>
        <taxon>malvids</taxon>
        <taxon>Brassicales</taxon>
        <taxon>Brassicaceae</taxon>
        <taxon>Camelineae</taxon>
        <taxon>Arabidopsis</taxon>
    </lineage>
</organism>
<comment type="similarity">
    <text evidence="1">Belongs to the PPR family. P subfamily.</text>
</comment>
<comment type="sequence caution" evidence="1">
    <conflict type="erroneous initiation">
        <sequence resource="EMBL-CDS" id="AAF79419"/>
    </conflict>
</comment>
<comment type="sequence caution" evidence="1">
    <conflict type="erroneous gene model prediction">
        <sequence resource="EMBL-CDS" id="AAF82237"/>
    </conflict>
    <text>The predicted gene has been split into 2 genes: At1g19270 and At1g19290.</text>
</comment>
<comment type="online information" name="Pentatricopeptide repeat proteins">
    <link uri="https://ppr.plantenergy.uwa.edu.au"/>
</comment>